<dbReference type="EC" id="2.7.8.26" evidence="1"/>
<dbReference type="EMBL" id="CP000446">
    <property type="protein sequence ID" value="ABI37923.1"/>
    <property type="molecule type" value="Genomic_DNA"/>
</dbReference>
<dbReference type="RefSeq" id="WP_011621638.1">
    <property type="nucleotide sequence ID" value="NC_008321.1"/>
</dbReference>
<dbReference type="KEGG" id="she:Shewmr4_0843"/>
<dbReference type="HOGENOM" id="CLU_057426_1_1_6"/>
<dbReference type="UniPathway" id="UPA00148">
    <property type="reaction ID" value="UER00238"/>
</dbReference>
<dbReference type="GO" id="GO:0005886">
    <property type="term" value="C:plasma membrane"/>
    <property type="evidence" value="ECO:0007669"/>
    <property type="project" value="UniProtKB-SubCell"/>
</dbReference>
<dbReference type="GO" id="GO:0051073">
    <property type="term" value="F:adenosylcobinamide-GDP ribazoletransferase activity"/>
    <property type="evidence" value="ECO:0007669"/>
    <property type="project" value="UniProtKB-UniRule"/>
</dbReference>
<dbReference type="GO" id="GO:0008818">
    <property type="term" value="F:cobalamin 5'-phosphate synthase activity"/>
    <property type="evidence" value="ECO:0007669"/>
    <property type="project" value="UniProtKB-UniRule"/>
</dbReference>
<dbReference type="GO" id="GO:0009236">
    <property type="term" value="P:cobalamin biosynthetic process"/>
    <property type="evidence" value="ECO:0007669"/>
    <property type="project" value="UniProtKB-UniRule"/>
</dbReference>
<dbReference type="HAMAP" id="MF_00719">
    <property type="entry name" value="CobS"/>
    <property type="match status" value="1"/>
</dbReference>
<dbReference type="InterPro" id="IPR003805">
    <property type="entry name" value="CobS"/>
</dbReference>
<dbReference type="NCBIfam" id="TIGR00317">
    <property type="entry name" value="cobS"/>
    <property type="match status" value="1"/>
</dbReference>
<dbReference type="NCBIfam" id="NF001277">
    <property type="entry name" value="PRK00235.1-3"/>
    <property type="match status" value="1"/>
</dbReference>
<dbReference type="PANTHER" id="PTHR34148">
    <property type="entry name" value="ADENOSYLCOBINAMIDE-GDP RIBAZOLETRANSFERASE"/>
    <property type="match status" value="1"/>
</dbReference>
<dbReference type="PANTHER" id="PTHR34148:SF1">
    <property type="entry name" value="ADENOSYLCOBINAMIDE-GDP RIBAZOLETRANSFERASE"/>
    <property type="match status" value="1"/>
</dbReference>
<dbReference type="Pfam" id="PF02654">
    <property type="entry name" value="CobS"/>
    <property type="match status" value="1"/>
</dbReference>
<comment type="function">
    <text evidence="1">Joins adenosylcobinamide-GDP and alpha-ribazole to generate adenosylcobalamin (Ado-cobalamin). Also synthesizes adenosylcobalamin 5'-phosphate from adenosylcobinamide-GDP and alpha-ribazole 5'-phosphate.</text>
</comment>
<comment type="catalytic activity">
    <reaction evidence="1">
        <text>alpha-ribazole + adenosylcob(III)inamide-GDP = adenosylcob(III)alamin + GMP + H(+)</text>
        <dbReference type="Rhea" id="RHEA:16049"/>
        <dbReference type="ChEBI" id="CHEBI:10329"/>
        <dbReference type="ChEBI" id="CHEBI:15378"/>
        <dbReference type="ChEBI" id="CHEBI:18408"/>
        <dbReference type="ChEBI" id="CHEBI:58115"/>
        <dbReference type="ChEBI" id="CHEBI:60487"/>
        <dbReference type="EC" id="2.7.8.26"/>
    </reaction>
</comment>
<comment type="catalytic activity">
    <reaction evidence="1">
        <text>alpha-ribazole 5'-phosphate + adenosylcob(III)inamide-GDP = adenosylcob(III)alamin 5'-phosphate + GMP + H(+)</text>
        <dbReference type="Rhea" id="RHEA:23560"/>
        <dbReference type="ChEBI" id="CHEBI:15378"/>
        <dbReference type="ChEBI" id="CHEBI:57918"/>
        <dbReference type="ChEBI" id="CHEBI:58115"/>
        <dbReference type="ChEBI" id="CHEBI:60487"/>
        <dbReference type="ChEBI" id="CHEBI:60493"/>
        <dbReference type="EC" id="2.7.8.26"/>
    </reaction>
</comment>
<comment type="cofactor">
    <cofactor evidence="1">
        <name>Mg(2+)</name>
        <dbReference type="ChEBI" id="CHEBI:18420"/>
    </cofactor>
</comment>
<comment type="pathway">
    <text evidence="1">Cofactor biosynthesis; adenosylcobalamin biosynthesis; adenosylcobalamin from cob(II)yrinate a,c-diamide: step 7/7.</text>
</comment>
<comment type="subcellular location">
    <subcellularLocation>
        <location evidence="1">Cell inner membrane</location>
        <topology evidence="1">Multi-pass membrane protein</topology>
    </subcellularLocation>
</comment>
<comment type="similarity">
    <text evidence="1">Belongs to the CobS family.</text>
</comment>
<organism>
    <name type="scientific">Shewanella sp. (strain MR-4)</name>
    <dbReference type="NCBI Taxonomy" id="60480"/>
    <lineage>
        <taxon>Bacteria</taxon>
        <taxon>Pseudomonadati</taxon>
        <taxon>Pseudomonadota</taxon>
        <taxon>Gammaproteobacteria</taxon>
        <taxon>Alteromonadales</taxon>
        <taxon>Shewanellaceae</taxon>
        <taxon>Shewanella</taxon>
    </lineage>
</organism>
<feature type="chain" id="PRO_1000045808" description="Adenosylcobinamide-GDP ribazoletransferase">
    <location>
        <begin position="1"/>
        <end position="262"/>
    </location>
</feature>
<feature type="transmembrane region" description="Helical" evidence="1">
    <location>
        <begin position="43"/>
        <end position="63"/>
    </location>
</feature>
<feature type="transmembrane region" description="Helical" evidence="1">
    <location>
        <begin position="66"/>
        <end position="86"/>
    </location>
</feature>
<feature type="transmembrane region" description="Helical" evidence="1">
    <location>
        <begin position="120"/>
        <end position="140"/>
    </location>
</feature>
<feature type="transmembrane region" description="Helical" evidence="1">
    <location>
        <begin position="146"/>
        <end position="166"/>
    </location>
</feature>
<feature type="transmembrane region" description="Helical" evidence="1">
    <location>
        <begin position="191"/>
        <end position="211"/>
    </location>
</feature>
<feature type="transmembrane region" description="Helical" evidence="1">
    <location>
        <begin position="242"/>
        <end position="262"/>
    </location>
</feature>
<sequence>MSERESWHKEIDLFLVAMGYFTRIPMPKWVEVDADKLNKASRYFGLVGLLVGLLSAIVFWLTQNWLPAGVSVLLSMVTGVLLTGGFHEDGLADTFDGFGGGWTAEDKLRIMKDSRLGSYGALALMLVLMLKWQLLVELALYDPVVAGSAMIVAHTVSRVVAASLIFTEKYVRDDESSKSKPLAQHQGINELFILIASGVLVLLVLKGIAALSLLLVMIGLRRLIVVIFRRQIGGYTGDTLGAAQQICEIVCYFVLLVVGSIL</sequence>
<reference key="1">
    <citation type="submission" date="2006-08" db="EMBL/GenBank/DDBJ databases">
        <title>Complete sequence of Shewanella sp. MR-4.</title>
        <authorList>
            <consortium name="US DOE Joint Genome Institute"/>
            <person name="Copeland A."/>
            <person name="Lucas S."/>
            <person name="Lapidus A."/>
            <person name="Barry K."/>
            <person name="Detter J.C."/>
            <person name="Glavina del Rio T."/>
            <person name="Hammon N."/>
            <person name="Israni S."/>
            <person name="Dalin E."/>
            <person name="Tice H."/>
            <person name="Pitluck S."/>
            <person name="Kiss H."/>
            <person name="Brettin T."/>
            <person name="Bruce D."/>
            <person name="Han C."/>
            <person name="Tapia R."/>
            <person name="Gilna P."/>
            <person name="Schmutz J."/>
            <person name="Larimer F."/>
            <person name="Land M."/>
            <person name="Hauser L."/>
            <person name="Kyrpides N."/>
            <person name="Mikhailova N."/>
            <person name="Nealson K."/>
            <person name="Konstantinidis K."/>
            <person name="Klappenbach J."/>
            <person name="Tiedje J."/>
            <person name="Richardson P."/>
        </authorList>
    </citation>
    <scope>NUCLEOTIDE SEQUENCE [LARGE SCALE GENOMIC DNA]</scope>
    <source>
        <strain>MR-4</strain>
    </source>
</reference>
<protein>
    <recommendedName>
        <fullName evidence="1">Adenosylcobinamide-GDP ribazoletransferase</fullName>
        <ecNumber evidence="1">2.7.8.26</ecNumber>
    </recommendedName>
    <alternativeName>
        <fullName evidence="1">Cobalamin synthase</fullName>
    </alternativeName>
    <alternativeName>
        <fullName evidence="1">Cobalamin-5'-phosphate synthase</fullName>
    </alternativeName>
</protein>
<proteinExistence type="inferred from homology"/>
<name>COBS_SHESM</name>
<keyword id="KW-0997">Cell inner membrane</keyword>
<keyword id="KW-1003">Cell membrane</keyword>
<keyword id="KW-0169">Cobalamin biosynthesis</keyword>
<keyword id="KW-0460">Magnesium</keyword>
<keyword id="KW-0472">Membrane</keyword>
<keyword id="KW-0808">Transferase</keyword>
<keyword id="KW-0812">Transmembrane</keyword>
<keyword id="KW-1133">Transmembrane helix</keyword>
<accession>Q0HLZ4</accession>
<gene>
    <name evidence="1" type="primary">cobS</name>
    <name type="ordered locus">Shewmr4_0843</name>
</gene>
<evidence type="ECO:0000255" key="1">
    <source>
        <dbReference type="HAMAP-Rule" id="MF_00719"/>
    </source>
</evidence>